<accession>B8HFR2</accession>
<organism>
    <name type="scientific">Pseudarthrobacter chlorophenolicus (strain ATCC 700700 / DSM 12829 / CIP 107037 / JCM 12360 / KCTC 9906 / NCIMB 13794 / A6)</name>
    <name type="common">Arthrobacter chlorophenolicus</name>
    <dbReference type="NCBI Taxonomy" id="452863"/>
    <lineage>
        <taxon>Bacteria</taxon>
        <taxon>Bacillati</taxon>
        <taxon>Actinomycetota</taxon>
        <taxon>Actinomycetes</taxon>
        <taxon>Micrococcales</taxon>
        <taxon>Micrococcaceae</taxon>
        <taxon>Pseudarthrobacter</taxon>
    </lineage>
</organism>
<feature type="chain" id="PRO_1000189854" description="1-deoxy-D-xylulose 5-phosphate reductoisomerase">
    <location>
        <begin position="1"/>
        <end position="394"/>
    </location>
</feature>
<feature type="binding site" evidence="1">
    <location>
        <position position="12"/>
    </location>
    <ligand>
        <name>NADPH</name>
        <dbReference type="ChEBI" id="CHEBI:57783"/>
    </ligand>
</feature>
<feature type="binding site" evidence="1">
    <location>
        <position position="13"/>
    </location>
    <ligand>
        <name>NADPH</name>
        <dbReference type="ChEBI" id="CHEBI:57783"/>
    </ligand>
</feature>
<feature type="binding site" evidence="1">
    <location>
        <position position="14"/>
    </location>
    <ligand>
        <name>NADPH</name>
        <dbReference type="ChEBI" id="CHEBI:57783"/>
    </ligand>
</feature>
<feature type="binding site" evidence="1">
    <location>
        <position position="15"/>
    </location>
    <ligand>
        <name>NADPH</name>
        <dbReference type="ChEBI" id="CHEBI:57783"/>
    </ligand>
</feature>
<feature type="binding site" evidence="1">
    <location>
        <position position="38"/>
    </location>
    <ligand>
        <name>NADPH</name>
        <dbReference type="ChEBI" id="CHEBI:57783"/>
    </ligand>
</feature>
<feature type="binding site" evidence="1">
    <location>
        <position position="41"/>
    </location>
    <ligand>
        <name>NADPH</name>
        <dbReference type="ChEBI" id="CHEBI:57783"/>
    </ligand>
</feature>
<feature type="binding site" evidence="1">
    <location>
        <position position="132"/>
    </location>
    <ligand>
        <name>NADPH</name>
        <dbReference type="ChEBI" id="CHEBI:57783"/>
    </ligand>
</feature>
<feature type="binding site" evidence="1">
    <location>
        <position position="133"/>
    </location>
    <ligand>
        <name>1-deoxy-D-xylulose 5-phosphate</name>
        <dbReference type="ChEBI" id="CHEBI:57792"/>
    </ligand>
</feature>
<feature type="binding site" evidence="1">
    <location>
        <position position="134"/>
    </location>
    <ligand>
        <name>NADPH</name>
        <dbReference type="ChEBI" id="CHEBI:57783"/>
    </ligand>
</feature>
<feature type="binding site" evidence="1">
    <location>
        <position position="156"/>
    </location>
    <ligand>
        <name>Mn(2+)</name>
        <dbReference type="ChEBI" id="CHEBI:29035"/>
    </ligand>
</feature>
<feature type="binding site" evidence="1">
    <location>
        <position position="157"/>
    </location>
    <ligand>
        <name>1-deoxy-D-xylulose 5-phosphate</name>
        <dbReference type="ChEBI" id="CHEBI:57792"/>
    </ligand>
</feature>
<feature type="binding site" evidence="1">
    <location>
        <position position="158"/>
    </location>
    <ligand>
        <name>1-deoxy-D-xylulose 5-phosphate</name>
        <dbReference type="ChEBI" id="CHEBI:57792"/>
    </ligand>
</feature>
<feature type="binding site" evidence="1">
    <location>
        <position position="158"/>
    </location>
    <ligand>
        <name>Mn(2+)</name>
        <dbReference type="ChEBI" id="CHEBI:29035"/>
    </ligand>
</feature>
<feature type="binding site" evidence="1">
    <location>
        <position position="182"/>
    </location>
    <ligand>
        <name>1-deoxy-D-xylulose 5-phosphate</name>
        <dbReference type="ChEBI" id="CHEBI:57792"/>
    </ligand>
</feature>
<feature type="binding site" evidence="1">
    <location>
        <position position="205"/>
    </location>
    <ligand>
        <name>1-deoxy-D-xylulose 5-phosphate</name>
        <dbReference type="ChEBI" id="CHEBI:57792"/>
    </ligand>
</feature>
<feature type="binding site" evidence="1">
    <location>
        <position position="211"/>
    </location>
    <ligand>
        <name>NADPH</name>
        <dbReference type="ChEBI" id="CHEBI:57783"/>
    </ligand>
</feature>
<feature type="binding site" evidence="1">
    <location>
        <position position="218"/>
    </location>
    <ligand>
        <name>1-deoxy-D-xylulose 5-phosphate</name>
        <dbReference type="ChEBI" id="CHEBI:57792"/>
    </ligand>
</feature>
<feature type="binding site" evidence="1">
    <location>
        <position position="223"/>
    </location>
    <ligand>
        <name>1-deoxy-D-xylulose 5-phosphate</name>
        <dbReference type="ChEBI" id="CHEBI:57792"/>
    </ligand>
</feature>
<feature type="binding site" evidence="1">
    <location>
        <position position="224"/>
    </location>
    <ligand>
        <name>1-deoxy-D-xylulose 5-phosphate</name>
        <dbReference type="ChEBI" id="CHEBI:57792"/>
    </ligand>
</feature>
<feature type="binding site" evidence="1">
    <location>
        <position position="227"/>
    </location>
    <ligand>
        <name>1-deoxy-D-xylulose 5-phosphate</name>
        <dbReference type="ChEBI" id="CHEBI:57792"/>
    </ligand>
</feature>
<feature type="binding site" evidence="1">
    <location>
        <position position="227"/>
    </location>
    <ligand>
        <name>Mn(2+)</name>
        <dbReference type="ChEBI" id="CHEBI:29035"/>
    </ligand>
</feature>
<protein>
    <recommendedName>
        <fullName evidence="1">1-deoxy-D-xylulose 5-phosphate reductoisomerase</fullName>
        <shortName evidence="1">DXP reductoisomerase</shortName>
        <ecNumber evidence="1">1.1.1.267</ecNumber>
    </recommendedName>
    <alternativeName>
        <fullName evidence="1">1-deoxyxylulose-5-phosphate reductoisomerase</fullName>
    </alternativeName>
    <alternativeName>
        <fullName evidence="1">2-C-methyl-D-erythritol 4-phosphate synthase</fullName>
    </alternativeName>
</protein>
<gene>
    <name evidence="1" type="primary">dxr</name>
    <name type="ordered locus">Achl_1411</name>
</gene>
<reference key="1">
    <citation type="submission" date="2009-01" db="EMBL/GenBank/DDBJ databases">
        <title>Complete sequence of chromosome of Arthrobacter chlorophenolicus A6.</title>
        <authorList>
            <consortium name="US DOE Joint Genome Institute"/>
            <person name="Lucas S."/>
            <person name="Copeland A."/>
            <person name="Lapidus A."/>
            <person name="Glavina del Rio T."/>
            <person name="Tice H."/>
            <person name="Bruce D."/>
            <person name="Goodwin L."/>
            <person name="Pitluck S."/>
            <person name="Goltsman E."/>
            <person name="Clum A."/>
            <person name="Larimer F."/>
            <person name="Land M."/>
            <person name="Hauser L."/>
            <person name="Kyrpides N."/>
            <person name="Mikhailova N."/>
            <person name="Jansson J."/>
            <person name="Richardson P."/>
        </authorList>
    </citation>
    <scope>NUCLEOTIDE SEQUENCE [LARGE SCALE GENOMIC DNA]</scope>
    <source>
        <strain>ATCC 700700 / DSM 12829 / CIP 107037 / JCM 12360 / KCTC 9906 / NCIMB 13794 / A6</strain>
    </source>
</reference>
<evidence type="ECO:0000255" key="1">
    <source>
        <dbReference type="HAMAP-Rule" id="MF_00183"/>
    </source>
</evidence>
<dbReference type="EC" id="1.1.1.267" evidence="1"/>
<dbReference type="EMBL" id="CP001341">
    <property type="protein sequence ID" value="ACL39401.1"/>
    <property type="molecule type" value="Genomic_DNA"/>
</dbReference>
<dbReference type="RefSeq" id="WP_015936624.1">
    <property type="nucleotide sequence ID" value="NC_011886.1"/>
</dbReference>
<dbReference type="SMR" id="B8HFR2"/>
<dbReference type="STRING" id="452863.Achl_1411"/>
<dbReference type="KEGG" id="ach:Achl_1411"/>
<dbReference type="eggNOG" id="COG0743">
    <property type="taxonomic scope" value="Bacteria"/>
</dbReference>
<dbReference type="HOGENOM" id="CLU_035714_4_0_11"/>
<dbReference type="OrthoDB" id="9806546at2"/>
<dbReference type="UniPathway" id="UPA00056">
    <property type="reaction ID" value="UER00092"/>
</dbReference>
<dbReference type="Proteomes" id="UP000002505">
    <property type="component" value="Chromosome"/>
</dbReference>
<dbReference type="GO" id="GO:0030604">
    <property type="term" value="F:1-deoxy-D-xylulose-5-phosphate reductoisomerase activity"/>
    <property type="evidence" value="ECO:0007669"/>
    <property type="project" value="UniProtKB-UniRule"/>
</dbReference>
<dbReference type="GO" id="GO:0030145">
    <property type="term" value="F:manganese ion binding"/>
    <property type="evidence" value="ECO:0007669"/>
    <property type="project" value="TreeGrafter"/>
</dbReference>
<dbReference type="GO" id="GO:0070402">
    <property type="term" value="F:NADPH binding"/>
    <property type="evidence" value="ECO:0007669"/>
    <property type="project" value="InterPro"/>
</dbReference>
<dbReference type="GO" id="GO:0051484">
    <property type="term" value="P:isopentenyl diphosphate biosynthetic process, methylerythritol 4-phosphate pathway involved in terpenoid biosynthetic process"/>
    <property type="evidence" value="ECO:0007669"/>
    <property type="project" value="TreeGrafter"/>
</dbReference>
<dbReference type="FunFam" id="3.40.50.720:FF:000045">
    <property type="entry name" value="1-deoxy-D-xylulose 5-phosphate reductoisomerase"/>
    <property type="match status" value="1"/>
</dbReference>
<dbReference type="Gene3D" id="1.10.1740.10">
    <property type="match status" value="1"/>
</dbReference>
<dbReference type="Gene3D" id="3.40.50.720">
    <property type="entry name" value="NAD(P)-binding Rossmann-like Domain"/>
    <property type="match status" value="1"/>
</dbReference>
<dbReference type="HAMAP" id="MF_00183">
    <property type="entry name" value="DXP_reductoisom"/>
    <property type="match status" value="1"/>
</dbReference>
<dbReference type="InterPro" id="IPR003821">
    <property type="entry name" value="DXP_reductoisomerase"/>
</dbReference>
<dbReference type="InterPro" id="IPR013644">
    <property type="entry name" value="DXP_reductoisomerase_C"/>
</dbReference>
<dbReference type="InterPro" id="IPR013512">
    <property type="entry name" value="DXP_reductoisomerase_N"/>
</dbReference>
<dbReference type="InterPro" id="IPR026877">
    <property type="entry name" value="DXPR_C"/>
</dbReference>
<dbReference type="InterPro" id="IPR036169">
    <property type="entry name" value="DXPR_C_sf"/>
</dbReference>
<dbReference type="InterPro" id="IPR036291">
    <property type="entry name" value="NAD(P)-bd_dom_sf"/>
</dbReference>
<dbReference type="NCBIfam" id="TIGR00243">
    <property type="entry name" value="Dxr"/>
    <property type="match status" value="1"/>
</dbReference>
<dbReference type="PANTHER" id="PTHR30525">
    <property type="entry name" value="1-DEOXY-D-XYLULOSE 5-PHOSPHATE REDUCTOISOMERASE"/>
    <property type="match status" value="1"/>
</dbReference>
<dbReference type="PANTHER" id="PTHR30525:SF0">
    <property type="entry name" value="1-DEOXY-D-XYLULOSE 5-PHOSPHATE REDUCTOISOMERASE, CHLOROPLASTIC"/>
    <property type="match status" value="1"/>
</dbReference>
<dbReference type="Pfam" id="PF08436">
    <property type="entry name" value="DXP_redisom_C"/>
    <property type="match status" value="1"/>
</dbReference>
<dbReference type="Pfam" id="PF02670">
    <property type="entry name" value="DXP_reductoisom"/>
    <property type="match status" value="1"/>
</dbReference>
<dbReference type="Pfam" id="PF13288">
    <property type="entry name" value="DXPR_C"/>
    <property type="match status" value="1"/>
</dbReference>
<dbReference type="PIRSF" id="PIRSF006205">
    <property type="entry name" value="Dxp_reductismrs"/>
    <property type="match status" value="1"/>
</dbReference>
<dbReference type="SUPFAM" id="SSF69055">
    <property type="entry name" value="1-deoxy-D-xylulose-5-phosphate reductoisomerase, C-terminal domain"/>
    <property type="match status" value="1"/>
</dbReference>
<dbReference type="SUPFAM" id="SSF55347">
    <property type="entry name" value="Glyceraldehyde-3-phosphate dehydrogenase-like, C-terminal domain"/>
    <property type="match status" value="1"/>
</dbReference>
<dbReference type="SUPFAM" id="SSF51735">
    <property type="entry name" value="NAD(P)-binding Rossmann-fold domains"/>
    <property type="match status" value="1"/>
</dbReference>
<sequence>MQPRRIAILGSTGSIGTQAIDVVDGAPHLFEVVALSAGGGNLALLARQAVHTGAAAVGIAAGDPRELAVLIDEAAAAAGRSGYRPEIIAGPDASTRIAGLDADVVLNGITGSIGLAPTLAALKSGATLALANKESLIVGGSLVKAAARDGQIVPVDSEHSAIAQCLRSGSAAEVDKLVLTASGGPFRGRSGEELHGVTPQEALAHPTWDMGLMVTTNSATLVNKGLEVIEAHLLFDIPLDRIDVVVHPQSVVHSMVQFVDGSTIAQASPPDMRLPIALGLGWPGRVPNAAAPCDWTKAATWTFEPLDATAFPAVDLAKDAAKQGSTFPAVFNAANEEAVTAFHGGRIRFTDIVDTVDAVLSEHTGSSRLTVESVLDAESWARARAHERLAVSSL</sequence>
<name>DXR_PSECP</name>
<comment type="function">
    <text evidence="1">Catalyzes the NADPH-dependent rearrangement and reduction of 1-deoxy-D-xylulose-5-phosphate (DXP) to 2-C-methyl-D-erythritol 4-phosphate (MEP).</text>
</comment>
<comment type="catalytic activity">
    <reaction evidence="1">
        <text>2-C-methyl-D-erythritol 4-phosphate + NADP(+) = 1-deoxy-D-xylulose 5-phosphate + NADPH + H(+)</text>
        <dbReference type="Rhea" id="RHEA:13717"/>
        <dbReference type="ChEBI" id="CHEBI:15378"/>
        <dbReference type="ChEBI" id="CHEBI:57783"/>
        <dbReference type="ChEBI" id="CHEBI:57792"/>
        <dbReference type="ChEBI" id="CHEBI:58262"/>
        <dbReference type="ChEBI" id="CHEBI:58349"/>
        <dbReference type="EC" id="1.1.1.267"/>
    </reaction>
    <physiologicalReaction direction="right-to-left" evidence="1">
        <dbReference type="Rhea" id="RHEA:13719"/>
    </physiologicalReaction>
</comment>
<comment type="cofactor">
    <cofactor evidence="1">
        <name>Mg(2+)</name>
        <dbReference type="ChEBI" id="CHEBI:18420"/>
    </cofactor>
    <cofactor evidence="1">
        <name>Mn(2+)</name>
        <dbReference type="ChEBI" id="CHEBI:29035"/>
    </cofactor>
</comment>
<comment type="pathway">
    <text evidence="1">Isoprenoid biosynthesis; isopentenyl diphosphate biosynthesis via DXP pathway; isopentenyl diphosphate from 1-deoxy-D-xylulose 5-phosphate: step 1/6.</text>
</comment>
<comment type="similarity">
    <text evidence="1">Belongs to the DXR family.</text>
</comment>
<proteinExistence type="inferred from homology"/>
<keyword id="KW-0414">Isoprene biosynthesis</keyword>
<keyword id="KW-0464">Manganese</keyword>
<keyword id="KW-0479">Metal-binding</keyword>
<keyword id="KW-0521">NADP</keyword>
<keyword id="KW-0560">Oxidoreductase</keyword>